<sequence length="175" mass="19869">MTVKSKSRISHYEVLGVPVDASTDEIKLTYRKMLLTLHPDKSKTVPIDSTIKIRSGVSINQIQEAYRVLSNDQLRAAYNRALNDSNKLAGFNNFGDGLDEFNLDEFEFNEEKLEYVMTCPRCQSGGGFVLSEDMLEECIEDGLTESEEQGYQVLTQCTACSLWLKVNFFINDEEE</sequence>
<comment type="function">
    <text evidence="1">Required for the first step of diphthamide biosynthesis, the transfer of 3-amino-3-carboxypropyl from S-adenosyl-L-methionine to a histidine residue. Diphthamide is a post-translational modification of histidine which occurs in elongation factor 2 (By similarity).</text>
</comment>
<comment type="pathway">
    <text>Protein modification; peptidyl-diphthamide biosynthesis.</text>
</comment>
<comment type="subcellular location">
    <subcellularLocation>
        <location evidence="1">Cytoplasm</location>
    </subcellularLocation>
    <subcellularLocation>
        <location evidence="1">Nucleus</location>
    </subcellularLocation>
</comment>
<comment type="domain">
    <text evidence="3">The DPH-type metal-binding (MB) domain can bind either zinc or iron ions.</text>
</comment>
<comment type="similarity">
    <text evidence="4">Belongs to the DPH4 family.</text>
</comment>
<keyword id="KW-0963">Cytoplasm</keyword>
<keyword id="KW-0408">Iron</keyword>
<keyword id="KW-0479">Metal-binding</keyword>
<keyword id="KW-0539">Nucleus</keyword>
<keyword id="KW-1185">Reference proteome</keyword>
<keyword id="KW-0862">Zinc</keyword>
<feature type="chain" id="PRO_0000071146" description="Diphthamide biosynthesis protein 4">
    <location>
        <begin position="1"/>
        <end position="175"/>
    </location>
</feature>
<feature type="domain" description="J" evidence="2">
    <location>
        <begin position="10"/>
        <end position="82"/>
    </location>
</feature>
<feature type="domain" description="DPH-type MB" evidence="3">
    <location>
        <begin position="97"/>
        <end position="169"/>
    </location>
</feature>
<feature type="binding site" evidence="3">
    <location>
        <position position="119"/>
    </location>
    <ligand>
        <name>Zn(2+)</name>
        <dbReference type="ChEBI" id="CHEBI:29105"/>
    </ligand>
</feature>
<feature type="binding site" evidence="3">
    <location>
        <position position="122"/>
    </location>
    <ligand>
        <name>Zn(2+)</name>
        <dbReference type="ChEBI" id="CHEBI:29105"/>
    </ligand>
</feature>
<feature type="binding site" evidence="3">
    <location>
        <position position="157"/>
    </location>
    <ligand>
        <name>Zn(2+)</name>
        <dbReference type="ChEBI" id="CHEBI:29105"/>
    </ligand>
</feature>
<feature type="binding site" evidence="3">
    <location>
        <position position="160"/>
    </location>
    <ligand>
        <name>Zn(2+)</name>
        <dbReference type="ChEBI" id="CHEBI:29105"/>
    </ligand>
</feature>
<dbReference type="EMBL" id="CR380949">
    <property type="protein sequence ID" value="CAG58279.1"/>
    <property type="molecule type" value="Genomic_DNA"/>
</dbReference>
<dbReference type="RefSeq" id="XP_445373.1">
    <property type="nucleotide sequence ID" value="XM_445373.1"/>
</dbReference>
<dbReference type="FunCoup" id="Q6FWM1">
    <property type="interactions" value="399"/>
</dbReference>
<dbReference type="STRING" id="284593.Q6FWM1"/>
<dbReference type="EnsemblFungi" id="CAGL0C04565g-T">
    <property type="protein sequence ID" value="CAGL0C04565g-T-p1"/>
    <property type="gene ID" value="CAGL0C04565g"/>
</dbReference>
<dbReference type="KEGG" id="cgr:2886952"/>
<dbReference type="CGD" id="CAL0127468">
    <property type="gene designation" value="CAGL0C04565g"/>
</dbReference>
<dbReference type="VEuPathDB" id="FungiDB:CAGL0C04565g"/>
<dbReference type="eggNOG" id="KOG0714">
    <property type="taxonomic scope" value="Eukaryota"/>
</dbReference>
<dbReference type="HOGENOM" id="CLU_017633_7_0_1"/>
<dbReference type="InParanoid" id="Q6FWM1"/>
<dbReference type="OMA" id="IIGCRGC"/>
<dbReference type="UniPathway" id="UPA00559"/>
<dbReference type="Proteomes" id="UP000002428">
    <property type="component" value="Chromosome C"/>
</dbReference>
<dbReference type="GO" id="GO:0005737">
    <property type="term" value="C:cytoplasm"/>
    <property type="evidence" value="ECO:0007669"/>
    <property type="project" value="UniProtKB-SubCell"/>
</dbReference>
<dbReference type="GO" id="GO:0005634">
    <property type="term" value="C:nucleus"/>
    <property type="evidence" value="ECO:0007669"/>
    <property type="project" value="UniProtKB-SubCell"/>
</dbReference>
<dbReference type="GO" id="GO:0001671">
    <property type="term" value="F:ATPase activator activity"/>
    <property type="evidence" value="ECO:0007669"/>
    <property type="project" value="TreeGrafter"/>
</dbReference>
<dbReference type="GO" id="GO:0008198">
    <property type="term" value="F:ferrous iron binding"/>
    <property type="evidence" value="ECO:0007669"/>
    <property type="project" value="EnsemblFungi"/>
</dbReference>
<dbReference type="GO" id="GO:0017183">
    <property type="term" value="P:protein histidyl modification to diphthamide"/>
    <property type="evidence" value="ECO:0007669"/>
    <property type="project" value="UniProtKB-UniPathway"/>
</dbReference>
<dbReference type="CDD" id="cd06257">
    <property type="entry name" value="DnaJ"/>
    <property type="match status" value="1"/>
</dbReference>
<dbReference type="Gene3D" id="1.10.287.110">
    <property type="entry name" value="DnaJ domain"/>
    <property type="match status" value="1"/>
</dbReference>
<dbReference type="Gene3D" id="3.10.660.10">
    <property type="entry name" value="DPH Zinc finger"/>
    <property type="match status" value="1"/>
</dbReference>
<dbReference type="InterPro" id="IPR001623">
    <property type="entry name" value="DnaJ_domain"/>
</dbReference>
<dbReference type="InterPro" id="IPR007872">
    <property type="entry name" value="DPH_MB_dom"/>
</dbReference>
<dbReference type="InterPro" id="IPR036671">
    <property type="entry name" value="DPH_MB_sf"/>
</dbReference>
<dbReference type="InterPro" id="IPR036869">
    <property type="entry name" value="J_dom_sf"/>
</dbReference>
<dbReference type="PANTHER" id="PTHR45255">
    <property type="entry name" value="DNAJ HOMOLOG SUBFAMILY C MEMBER 24"/>
    <property type="match status" value="1"/>
</dbReference>
<dbReference type="PANTHER" id="PTHR45255:SF1">
    <property type="entry name" value="DNAJ HOMOLOG SUBFAMILY C MEMBER 24"/>
    <property type="match status" value="1"/>
</dbReference>
<dbReference type="Pfam" id="PF00226">
    <property type="entry name" value="DnaJ"/>
    <property type="match status" value="1"/>
</dbReference>
<dbReference type="Pfam" id="PF05207">
    <property type="entry name" value="Zn_ribbon_CSL"/>
    <property type="match status" value="1"/>
</dbReference>
<dbReference type="PRINTS" id="PR00625">
    <property type="entry name" value="JDOMAIN"/>
</dbReference>
<dbReference type="SMART" id="SM00271">
    <property type="entry name" value="DnaJ"/>
    <property type="match status" value="1"/>
</dbReference>
<dbReference type="SUPFAM" id="SSF46565">
    <property type="entry name" value="Chaperone J-domain"/>
    <property type="match status" value="1"/>
</dbReference>
<dbReference type="SUPFAM" id="SSF144217">
    <property type="entry name" value="CSL zinc finger"/>
    <property type="match status" value="1"/>
</dbReference>
<dbReference type="PROSITE" id="PS50076">
    <property type="entry name" value="DNAJ_2"/>
    <property type="match status" value="1"/>
</dbReference>
<dbReference type="PROSITE" id="PS51074">
    <property type="entry name" value="DPH_MB"/>
    <property type="match status" value="1"/>
</dbReference>
<accession>Q6FWM1</accession>
<reference key="1">
    <citation type="journal article" date="2004" name="Nature">
        <title>Genome evolution in yeasts.</title>
        <authorList>
            <person name="Dujon B."/>
            <person name="Sherman D."/>
            <person name="Fischer G."/>
            <person name="Durrens P."/>
            <person name="Casaregola S."/>
            <person name="Lafontaine I."/>
            <person name="de Montigny J."/>
            <person name="Marck C."/>
            <person name="Neuveglise C."/>
            <person name="Talla E."/>
            <person name="Goffard N."/>
            <person name="Frangeul L."/>
            <person name="Aigle M."/>
            <person name="Anthouard V."/>
            <person name="Babour A."/>
            <person name="Barbe V."/>
            <person name="Barnay S."/>
            <person name="Blanchin S."/>
            <person name="Beckerich J.-M."/>
            <person name="Beyne E."/>
            <person name="Bleykasten C."/>
            <person name="Boisrame A."/>
            <person name="Boyer J."/>
            <person name="Cattolico L."/>
            <person name="Confanioleri F."/>
            <person name="de Daruvar A."/>
            <person name="Despons L."/>
            <person name="Fabre E."/>
            <person name="Fairhead C."/>
            <person name="Ferry-Dumazet H."/>
            <person name="Groppi A."/>
            <person name="Hantraye F."/>
            <person name="Hennequin C."/>
            <person name="Jauniaux N."/>
            <person name="Joyet P."/>
            <person name="Kachouri R."/>
            <person name="Kerrest A."/>
            <person name="Koszul R."/>
            <person name="Lemaire M."/>
            <person name="Lesur I."/>
            <person name="Ma L."/>
            <person name="Muller H."/>
            <person name="Nicaud J.-M."/>
            <person name="Nikolski M."/>
            <person name="Oztas S."/>
            <person name="Ozier-Kalogeropoulos O."/>
            <person name="Pellenz S."/>
            <person name="Potier S."/>
            <person name="Richard G.-F."/>
            <person name="Straub M.-L."/>
            <person name="Suleau A."/>
            <person name="Swennen D."/>
            <person name="Tekaia F."/>
            <person name="Wesolowski-Louvel M."/>
            <person name="Westhof E."/>
            <person name="Wirth B."/>
            <person name="Zeniou-Meyer M."/>
            <person name="Zivanovic Y."/>
            <person name="Bolotin-Fukuhara M."/>
            <person name="Thierry A."/>
            <person name="Bouchier C."/>
            <person name="Caudron B."/>
            <person name="Scarpelli C."/>
            <person name="Gaillardin C."/>
            <person name="Weissenbach J."/>
            <person name="Wincker P."/>
            <person name="Souciet J.-L."/>
        </authorList>
    </citation>
    <scope>NUCLEOTIDE SEQUENCE [LARGE SCALE GENOMIC DNA]</scope>
    <source>
        <strain>ATCC 2001 / BCRC 20586 / JCM 3761 / NBRC 0622 / NRRL Y-65 / CBS 138</strain>
    </source>
</reference>
<evidence type="ECO:0000250" key="1"/>
<evidence type="ECO:0000255" key="2">
    <source>
        <dbReference type="PROSITE-ProRule" id="PRU00286"/>
    </source>
</evidence>
<evidence type="ECO:0000255" key="3">
    <source>
        <dbReference type="PROSITE-ProRule" id="PRU00456"/>
    </source>
</evidence>
<evidence type="ECO:0000305" key="4"/>
<organism>
    <name type="scientific">Candida glabrata (strain ATCC 2001 / BCRC 20586 / JCM 3761 / NBRC 0622 / NRRL Y-65 / CBS 138)</name>
    <name type="common">Yeast</name>
    <name type="synonym">Nakaseomyces glabratus</name>
    <dbReference type="NCBI Taxonomy" id="284593"/>
    <lineage>
        <taxon>Eukaryota</taxon>
        <taxon>Fungi</taxon>
        <taxon>Dikarya</taxon>
        <taxon>Ascomycota</taxon>
        <taxon>Saccharomycotina</taxon>
        <taxon>Saccharomycetes</taxon>
        <taxon>Saccharomycetales</taxon>
        <taxon>Saccharomycetaceae</taxon>
        <taxon>Nakaseomyces</taxon>
    </lineage>
</organism>
<name>DPH4_CANGA</name>
<protein>
    <recommendedName>
        <fullName>Diphthamide biosynthesis protein 4</fullName>
    </recommendedName>
</protein>
<gene>
    <name type="primary">DPH4</name>
    <name type="ordered locus">CAGL0C04565g</name>
</gene>
<proteinExistence type="inferred from homology"/>